<gene>
    <name evidence="1" type="primary">serS</name>
    <name type="ordered locus">Xfasm12_1477</name>
</gene>
<organism>
    <name type="scientific">Xylella fastidiosa (strain M12)</name>
    <dbReference type="NCBI Taxonomy" id="405440"/>
    <lineage>
        <taxon>Bacteria</taxon>
        <taxon>Pseudomonadati</taxon>
        <taxon>Pseudomonadota</taxon>
        <taxon>Gammaproteobacteria</taxon>
        <taxon>Lysobacterales</taxon>
        <taxon>Lysobacteraceae</taxon>
        <taxon>Xylella</taxon>
    </lineage>
</organism>
<proteinExistence type="inferred from homology"/>
<comment type="function">
    <text evidence="1">Catalyzes the attachment of serine to tRNA(Ser). Is also able to aminoacylate tRNA(Sec) with serine, to form the misacylated tRNA L-seryl-tRNA(Sec), which will be further converted into selenocysteinyl-tRNA(Sec).</text>
</comment>
<comment type="catalytic activity">
    <reaction evidence="1">
        <text>tRNA(Ser) + L-serine + ATP = L-seryl-tRNA(Ser) + AMP + diphosphate + H(+)</text>
        <dbReference type="Rhea" id="RHEA:12292"/>
        <dbReference type="Rhea" id="RHEA-COMP:9669"/>
        <dbReference type="Rhea" id="RHEA-COMP:9703"/>
        <dbReference type="ChEBI" id="CHEBI:15378"/>
        <dbReference type="ChEBI" id="CHEBI:30616"/>
        <dbReference type="ChEBI" id="CHEBI:33019"/>
        <dbReference type="ChEBI" id="CHEBI:33384"/>
        <dbReference type="ChEBI" id="CHEBI:78442"/>
        <dbReference type="ChEBI" id="CHEBI:78533"/>
        <dbReference type="ChEBI" id="CHEBI:456215"/>
        <dbReference type="EC" id="6.1.1.11"/>
    </reaction>
</comment>
<comment type="catalytic activity">
    <reaction evidence="1">
        <text>tRNA(Sec) + L-serine + ATP = L-seryl-tRNA(Sec) + AMP + diphosphate + H(+)</text>
        <dbReference type="Rhea" id="RHEA:42580"/>
        <dbReference type="Rhea" id="RHEA-COMP:9742"/>
        <dbReference type="Rhea" id="RHEA-COMP:10128"/>
        <dbReference type="ChEBI" id="CHEBI:15378"/>
        <dbReference type="ChEBI" id="CHEBI:30616"/>
        <dbReference type="ChEBI" id="CHEBI:33019"/>
        <dbReference type="ChEBI" id="CHEBI:33384"/>
        <dbReference type="ChEBI" id="CHEBI:78442"/>
        <dbReference type="ChEBI" id="CHEBI:78533"/>
        <dbReference type="ChEBI" id="CHEBI:456215"/>
        <dbReference type="EC" id="6.1.1.11"/>
    </reaction>
</comment>
<comment type="pathway">
    <text evidence="1">Aminoacyl-tRNA biosynthesis; selenocysteinyl-tRNA(Sec) biosynthesis; L-seryl-tRNA(Sec) from L-serine and tRNA(Sec): step 1/1.</text>
</comment>
<comment type="subunit">
    <text evidence="1">Homodimer. The tRNA molecule binds across the dimer.</text>
</comment>
<comment type="subcellular location">
    <subcellularLocation>
        <location evidence="1">Cytoplasm</location>
    </subcellularLocation>
</comment>
<comment type="domain">
    <text evidence="1">Consists of two distinct domains, a catalytic core and a N-terminal extension that is involved in tRNA binding.</text>
</comment>
<comment type="similarity">
    <text evidence="1">Belongs to the class-II aminoacyl-tRNA synthetase family. Type-1 seryl-tRNA synthetase subfamily.</text>
</comment>
<accession>B0U3G5</accession>
<sequence length="426" mass="47433">MLDPTLLRQQLAKLAECLLTVRGFTLDVAALEALESERKRIQVHTQELQSLRNSKSKAIGQARSKGEDVSALMAEVAAFSDDLKASEIALEEIRTELEKVALDIPNLPQQDVPLGADERENVEQARWGVPRTFDFAIKDHVELGACHGWLDAESAAKLSGARFTVLRGPIARLHRALAQCMLDLHVSQHGYEEVNVPIIVNADSLHGTGQLPKFEEDMFSTQLGEHRRYLISTSEISLTNLVRNEIIEADRLPLRMVAHSLCFRSEAGSGGRDTRGMIRQHQFEKVELVSVCKPQESEGEHHRMTRCAETVLEMLGLPYRKILLCTGDMGFAATKTYDLEVWLPSQGMYREISSCSNCGDFQARRMQARWRNSVTGKPELVHTLNGSGVAVGRAMIAVMENYQNADGSITVPEVLRPYMDGLSRIG</sequence>
<keyword id="KW-0030">Aminoacyl-tRNA synthetase</keyword>
<keyword id="KW-0067">ATP-binding</keyword>
<keyword id="KW-0963">Cytoplasm</keyword>
<keyword id="KW-0436">Ligase</keyword>
<keyword id="KW-0547">Nucleotide-binding</keyword>
<keyword id="KW-0648">Protein biosynthesis</keyword>
<evidence type="ECO:0000255" key="1">
    <source>
        <dbReference type="HAMAP-Rule" id="MF_00176"/>
    </source>
</evidence>
<name>SYS_XYLFM</name>
<protein>
    <recommendedName>
        <fullName evidence="1">Serine--tRNA ligase</fullName>
        <ecNumber evidence="1">6.1.1.11</ecNumber>
    </recommendedName>
    <alternativeName>
        <fullName evidence="1">Seryl-tRNA synthetase</fullName>
        <shortName evidence="1">SerRS</shortName>
    </alternativeName>
    <alternativeName>
        <fullName evidence="1">Seryl-tRNA(Ser/Sec) synthetase</fullName>
    </alternativeName>
</protein>
<feature type="chain" id="PRO_1000098149" description="Serine--tRNA ligase">
    <location>
        <begin position="1"/>
        <end position="426"/>
    </location>
</feature>
<feature type="binding site" evidence="1">
    <location>
        <begin position="233"/>
        <end position="235"/>
    </location>
    <ligand>
        <name>L-serine</name>
        <dbReference type="ChEBI" id="CHEBI:33384"/>
    </ligand>
</feature>
<feature type="binding site" evidence="1">
    <location>
        <begin position="264"/>
        <end position="266"/>
    </location>
    <ligand>
        <name>ATP</name>
        <dbReference type="ChEBI" id="CHEBI:30616"/>
    </ligand>
</feature>
<feature type="binding site" evidence="1">
    <location>
        <position position="287"/>
    </location>
    <ligand>
        <name>L-serine</name>
        <dbReference type="ChEBI" id="CHEBI:33384"/>
    </ligand>
</feature>
<feature type="binding site" evidence="1">
    <location>
        <begin position="351"/>
        <end position="354"/>
    </location>
    <ligand>
        <name>ATP</name>
        <dbReference type="ChEBI" id="CHEBI:30616"/>
    </ligand>
</feature>
<feature type="binding site" evidence="1">
    <location>
        <position position="387"/>
    </location>
    <ligand>
        <name>L-serine</name>
        <dbReference type="ChEBI" id="CHEBI:33384"/>
    </ligand>
</feature>
<dbReference type="EC" id="6.1.1.11" evidence="1"/>
<dbReference type="EMBL" id="CP000941">
    <property type="protein sequence ID" value="ACA12394.1"/>
    <property type="molecule type" value="Genomic_DNA"/>
</dbReference>
<dbReference type="RefSeq" id="WP_004083457.1">
    <property type="nucleotide sequence ID" value="NC_010513.1"/>
</dbReference>
<dbReference type="SMR" id="B0U3G5"/>
<dbReference type="KEGG" id="xfm:Xfasm12_1477"/>
<dbReference type="HOGENOM" id="CLU_023797_1_1_6"/>
<dbReference type="UniPathway" id="UPA00906">
    <property type="reaction ID" value="UER00895"/>
</dbReference>
<dbReference type="GO" id="GO:0005737">
    <property type="term" value="C:cytoplasm"/>
    <property type="evidence" value="ECO:0007669"/>
    <property type="project" value="UniProtKB-SubCell"/>
</dbReference>
<dbReference type="GO" id="GO:0005524">
    <property type="term" value="F:ATP binding"/>
    <property type="evidence" value="ECO:0007669"/>
    <property type="project" value="UniProtKB-UniRule"/>
</dbReference>
<dbReference type="GO" id="GO:0004828">
    <property type="term" value="F:serine-tRNA ligase activity"/>
    <property type="evidence" value="ECO:0007669"/>
    <property type="project" value="UniProtKB-UniRule"/>
</dbReference>
<dbReference type="GO" id="GO:0016260">
    <property type="term" value="P:selenocysteine biosynthetic process"/>
    <property type="evidence" value="ECO:0007669"/>
    <property type="project" value="UniProtKB-UniRule"/>
</dbReference>
<dbReference type="GO" id="GO:0006434">
    <property type="term" value="P:seryl-tRNA aminoacylation"/>
    <property type="evidence" value="ECO:0007669"/>
    <property type="project" value="UniProtKB-UniRule"/>
</dbReference>
<dbReference type="CDD" id="cd00770">
    <property type="entry name" value="SerRS_core"/>
    <property type="match status" value="1"/>
</dbReference>
<dbReference type="Gene3D" id="3.30.930.10">
    <property type="entry name" value="Bira Bifunctional Protein, Domain 2"/>
    <property type="match status" value="1"/>
</dbReference>
<dbReference type="Gene3D" id="1.10.287.40">
    <property type="entry name" value="Serine-tRNA synthetase, tRNA binding domain"/>
    <property type="match status" value="1"/>
</dbReference>
<dbReference type="HAMAP" id="MF_00176">
    <property type="entry name" value="Ser_tRNA_synth_type1"/>
    <property type="match status" value="1"/>
</dbReference>
<dbReference type="InterPro" id="IPR002314">
    <property type="entry name" value="aa-tRNA-synt_IIb"/>
</dbReference>
<dbReference type="InterPro" id="IPR006195">
    <property type="entry name" value="aa-tRNA-synth_II"/>
</dbReference>
<dbReference type="InterPro" id="IPR045864">
    <property type="entry name" value="aa-tRNA-synth_II/BPL/LPL"/>
</dbReference>
<dbReference type="InterPro" id="IPR002317">
    <property type="entry name" value="Ser-tRNA-ligase_type_1"/>
</dbReference>
<dbReference type="InterPro" id="IPR015866">
    <property type="entry name" value="Ser-tRNA-synth_1_N"/>
</dbReference>
<dbReference type="InterPro" id="IPR042103">
    <property type="entry name" value="SerRS_1_N_sf"/>
</dbReference>
<dbReference type="InterPro" id="IPR033729">
    <property type="entry name" value="SerRS_core"/>
</dbReference>
<dbReference type="InterPro" id="IPR010978">
    <property type="entry name" value="tRNA-bd_arm"/>
</dbReference>
<dbReference type="NCBIfam" id="TIGR00414">
    <property type="entry name" value="serS"/>
    <property type="match status" value="1"/>
</dbReference>
<dbReference type="PANTHER" id="PTHR43697:SF1">
    <property type="entry name" value="SERINE--TRNA LIGASE"/>
    <property type="match status" value="1"/>
</dbReference>
<dbReference type="PANTHER" id="PTHR43697">
    <property type="entry name" value="SERYL-TRNA SYNTHETASE"/>
    <property type="match status" value="1"/>
</dbReference>
<dbReference type="Pfam" id="PF02403">
    <property type="entry name" value="Seryl_tRNA_N"/>
    <property type="match status" value="1"/>
</dbReference>
<dbReference type="Pfam" id="PF00587">
    <property type="entry name" value="tRNA-synt_2b"/>
    <property type="match status" value="1"/>
</dbReference>
<dbReference type="PIRSF" id="PIRSF001529">
    <property type="entry name" value="Ser-tRNA-synth_IIa"/>
    <property type="match status" value="1"/>
</dbReference>
<dbReference type="PRINTS" id="PR00981">
    <property type="entry name" value="TRNASYNTHSER"/>
</dbReference>
<dbReference type="SUPFAM" id="SSF55681">
    <property type="entry name" value="Class II aaRS and biotin synthetases"/>
    <property type="match status" value="1"/>
</dbReference>
<dbReference type="SUPFAM" id="SSF46589">
    <property type="entry name" value="tRNA-binding arm"/>
    <property type="match status" value="1"/>
</dbReference>
<dbReference type="PROSITE" id="PS50862">
    <property type="entry name" value="AA_TRNA_LIGASE_II"/>
    <property type="match status" value="1"/>
</dbReference>
<reference key="1">
    <citation type="journal article" date="2010" name="J. Bacteriol.">
        <title>Whole genome sequences of two Xylella fastidiosa strains (M12 and M23) causing almond leaf scorch disease in California.</title>
        <authorList>
            <person name="Chen J."/>
            <person name="Xie G."/>
            <person name="Han S."/>
            <person name="Chertkov O."/>
            <person name="Sims D."/>
            <person name="Civerolo E.L."/>
        </authorList>
    </citation>
    <scope>NUCLEOTIDE SEQUENCE [LARGE SCALE GENOMIC DNA]</scope>
    <source>
        <strain>M12</strain>
    </source>
</reference>